<proteinExistence type="inferred from homology"/>
<organism>
    <name type="scientific">Clostridium perfringens (strain SM101 / Type A)</name>
    <dbReference type="NCBI Taxonomy" id="289380"/>
    <lineage>
        <taxon>Bacteria</taxon>
        <taxon>Bacillati</taxon>
        <taxon>Bacillota</taxon>
        <taxon>Clostridia</taxon>
        <taxon>Eubacteriales</taxon>
        <taxon>Clostridiaceae</taxon>
        <taxon>Clostridium</taxon>
    </lineage>
</organism>
<keyword id="KW-0678">Repressor</keyword>
<keyword id="KW-0346">Stress response</keyword>
<keyword id="KW-0804">Transcription</keyword>
<keyword id="KW-0805">Transcription regulation</keyword>
<protein>
    <recommendedName>
        <fullName evidence="1">Heat-inducible transcription repressor HrcA</fullName>
    </recommendedName>
</protein>
<evidence type="ECO:0000255" key="1">
    <source>
        <dbReference type="HAMAP-Rule" id="MF_00081"/>
    </source>
</evidence>
<feature type="chain" id="PRO_1000010400" description="Heat-inducible transcription repressor HrcA">
    <location>
        <begin position="1"/>
        <end position="339"/>
    </location>
</feature>
<name>HRCA_CLOPS</name>
<accession>Q0SRE1</accession>
<comment type="function">
    <text evidence="1">Negative regulator of class I heat shock genes (grpE-dnaK-dnaJ and groELS operons). Prevents heat-shock induction of these operons.</text>
</comment>
<comment type="similarity">
    <text evidence="1">Belongs to the HrcA family.</text>
</comment>
<sequence>MIDDRKLQILRAIIQDYISTGEPVGSRTIAKKYNLGVSSATIRNEMADLEDMGFLEQPHTSAGRIPSSRGYRLYVDRMIEFERLSSEEEGLIRNSIIDGTLYEVDKIIKQTSALLSELTKMTCIVKAPSVHKSFVKSIQLLKVDDVSILCVLVTDNGVIRNTVIKVKSVPISEELIKISKIITERLKNLTIEQINLEVISNLNRALNGYEDIVNAVLPALYESLKGDETSEVFLEGTINIFNYPEYNNIHKAKEILELLHDKKSISELISDSDDMTVKIGDEIFVPEAKECSIISAGYHVGDRSLGTIALIGPRRINYSKVLSIMTEVMKELNETLKNK</sequence>
<gene>
    <name evidence="1" type="primary">hrcA</name>
    <name type="ordered locus">CPR_2007</name>
</gene>
<dbReference type="EMBL" id="CP000312">
    <property type="protein sequence ID" value="ABG85802.1"/>
    <property type="molecule type" value="Genomic_DNA"/>
</dbReference>
<dbReference type="SMR" id="Q0SRE1"/>
<dbReference type="KEGG" id="cpr:CPR_2007"/>
<dbReference type="Proteomes" id="UP000001824">
    <property type="component" value="Chromosome"/>
</dbReference>
<dbReference type="GO" id="GO:0003677">
    <property type="term" value="F:DNA binding"/>
    <property type="evidence" value="ECO:0007669"/>
    <property type="project" value="InterPro"/>
</dbReference>
<dbReference type="GO" id="GO:0045892">
    <property type="term" value="P:negative regulation of DNA-templated transcription"/>
    <property type="evidence" value="ECO:0007669"/>
    <property type="project" value="UniProtKB-UniRule"/>
</dbReference>
<dbReference type="FunFam" id="1.10.10.10:FF:000049">
    <property type="entry name" value="Heat-inducible transcription repressor HrcA"/>
    <property type="match status" value="1"/>
</dbReference>
<dbReference type="Gene3D" id="3.30.450.40">
    <property type="match status" value="1"/>
</dbReference>
<dbReference type="Gene3D" id="3.30.390.60">
    <property type="entry name" value="Heat-inducible transcription repressor hrca homolog, domain 3"/>
    <property type="match status" value="1"/>
</dbReference>
<dbReference type="Gene3D" id="1.10.10.10">
    <property type="entry name" value="Winged helix-like DNA-binding domain superfamily/Winged helix DNA-binding domain"/>
    <property type="match status" value="1"/>
</dbReference>
<dbReference type="HAMAP" id="MF_00081">
    <property type="entry name" value="HrcA"/>
    <property type="match status" value="1"/>
</dbReference>
<dbReference type="InterPro" id="IPR029016">
    <property type="entry name" value="GAF-like_dom_sf"/>
</dbReference>
<dbReference type="InterPro" id="IPR002571">
    <property type="entry name" value="HrcA"/>
</dbReference>
<dbReference type="InterPro" id="IPR021153">
    <property type="entry name" value="HrcA_C"/>
</dbReference>
<dbReference type="InterPro" id="IPR036388">
    <property type="entry name" value="WH-like_DNA-bd_sf"/>
</dbReference>
<dbReference type="InterPro" id="IPR036390">
    <property type="entry name" value="WH_DNA-bd_sf"/>
</dbReference>
<dbReference type="InterPro" id="IPR023120">
    <property type="entry name" value="WHTH_transcript_rep_HrcA_IDD"/>
</dbReference>
<dbReference type="NCBIfam" id="TIGR00331">
    <property type="entry name" value="hrcA"/>
    <property type="match status" value="1"/>
</dbReference>
<dbReference type="PANTHER" id="PTHR34824">
    <property type="entry name" value="HEAT-INDUCIBLE TRANSCRIPTION REPRESSOR HRCA"/>
    <property type="match status" value="1"/>
</dbReference>
<dbReference type="PANTHER" id="PTHR34824:SF1">
    <property type="entry name" value="HEAT-INDUCIBLE TRANSCRIPTION REPRESSOR HRCA"/>
    <property type="match status" value="1"/>
</dbReference>
<dbReference type="Pfam" id="PF01628">
    <property type="entry name" value="HrcA"/>
    <property type="match status" value="1"/>
</dbReference>
<dbReference type="PIRSF" id="PIRSF005485">
    <property type="entry name" value="HrcA"/>
    <property type="match status" value="1"/>
</dbReference>
<dbReference type="SUPFAM" id="SSF55781">
    <property type="entry name" value="GAF domain-like"/>
    <property type="match status" value="1"/>
</dbReference>
<dbReference type="SUPFAM" id="SSF46785">
    <property type="entry name" value="Winged helix' DNA-binding domain"/>
    <property type="match status" value="1"/>
</dbReference>
<reference key="1">
    <citation type="journal article" date="2006" name="Genome Res.">
        <title>Skewed genomic variability in strains of the toxigenic bacterial pathogen, Clostridium perfringens.</title>
        <authorList>
            <person name="Myers G.S.A."/>
            <person name="Rasko D.A."/>
            <person name="Cheung J.K."/>
            <person name="Ravel J."/>
            <person name="Seshadri R."/>
            <person name="DeBoy R.T."/>
            <person name="Ren Q."/>
            <person name="Varga J."/>
            <person name="Awad M.M."/>
            <person name="Brinkac L.M."/>
            <person name="Daugherty S.C."/>
            <person name="Haft D.H."/>
            <person name="Dodson R.J."/>
            <person name="Madupu R."/>
            <person name="Nelson W.C."/>
            <person name="Rosovitz M.J."/>
            <person name="Sullivan S.A."/>
            <person name="Khouri H."/>
            <person name="Dimitrov G.I."/>
            <person name="Watkins K.L."/>
            <person name="Mulligan S."/>
            <person name="Benton J."/>
            <person name="Radune D."/>
            <person name="Fisher D.J."/>
            <person name="Atkins H.S."/>
            <person name="Hiscox T."/>
            <person name="Jost B.H."/>
            <person name="Billington S.J."/>
            <person name="Songer J.G."/>
            <person name="McClane B.A."/>
            <person name="Titball R.W."/>
            <person name="Rood J.I."/>
            <person name="Melville S.B."/>
            <person name="Paulsen I.T."/>
        </authorList>
    </citation>
    <scope>NUCLEOTIDE SEQUENCE [LARGE SCALE GENOMIC DNA]</scope>
    <source>
        <strain>SM101 / Type A</strain>
    </source>
</reference>